<sequence>MSRVPSPPPPAEMSSGPVAESWCYTQIKVVKFSYMWTINNFSFCREEMGEVIKSSTFSSGANDKLKWCLRVNPKGLDEESKDYLSLYLLLVSCPKSEVRAKFKFSILNAKGEETKAMESQRAYRFVQGKDWGFKKFIRRDFLLDEANGLLPDDKLTLFCEVSVVQDSVNISGQNTMNMVKVPECRLADELGGLWENSRFTDCCLCVAGQEFQAHKAILAARSPVFSAMFEHEMEESKKNRVEINDVEPEVFKEMMCFIYTGKAPNLDKMADDLLAAADKYALERLKVMCEDALCSNLSVENAAEILILADLHSADQLKTQAVDFINYHASDVLETSGWKSMVVSHPHLVAEAYRSLASAQCPFLGPPRKRLKQS</sequence>
<gene>
    <name type="primary">SPOP</name>
</gene>
<evidence type="ECO:0000250" key="1"/>
<evidence type="ECO:0000250" key="2">
    <source>
        <dbReference type="UniProtKB" id="O43791"/>
    </source>
</evidence>
<evidence type="ECO:0000250" key="3">
    <source>
        <dbReference type="UniProtKB" id="Q6ZWS8"/>
    </source>
</evidence>
<evidence type="ECO:0000255" key="4">
    <source>
        <dbReference type="PROSITE-ProRule" id="PRU00037"/>
    </source>
</evidence>
<evidence type="ECO:0000255" key="5">
    <source>
        <dbReference type="PROSITE-ProRule" id="PRU00129"/>
    </source>
</evidence>
<evidence type="ECO:0000305" key="6"/>
<protein>
    <recommendedName>
        <fullName>Speckle-type POZ protein</fullName>
    </recommendedName>
</protein>
<dbReference type="EMBL" id="BC119970">
    <property type="protein sequence ID" value="AAI19971.1"/>
    <property type="molecule type" value="mRNA"/>
</dbReference>
<dbReference type="RefSeq" id="NP_001069404.1">
    <property type="nucleotide sequence ID" value="NM_001075936.1"/>
</dbReference>
<dbReference type="RefSeq" id="XP_005220628.1">
    <property type="nucleotide sequence ID" value="XM_005220571.4"/>
</dbReference>
<dbReference type="RefSeq" id="XP_005220629.1">
    <property type="nucleotide sequence ID" value="XM_005220572.5"/>
</dbReference>
<dbReference type="SMR" id="Q0VCW1"/>
<dbReference type="FunCoup" id="Q0VCW1">
    <property type="interactions" value="1805"/>
</dbReference>
<dbReference type="STRING" id="9913.ENSBTAP00000007660"/>
<dbReference type="PaxDb" id="9913-ENSBTAP00000007660"/>
<dbReference type="Ensembl" id="ENSBTAT00000007660.6">
    <property type="protein sequence ID" value="ENSBTAP00000007660.5"/>
    <property type="gene ID" value="ENSBTAG00000005824.7"/>
</dbReference>
<dbReference type="GeneID" id="530618"/>
<dbReference type="KEGG" id="bta:530618"/>
<dbReference type="CTD" id="8405"/>
<dbReference type="VEuPathDB" id="HostDB:ENSBTAG00000005824"/>
<dbReference type="VGNC" id="VGNC:35229">
    <property type="gene designation" value="SPOP"/>
</dbReference>
<dbReference type="eggNOG" id="KOG1987">
    <property type="taxonomic scope" value="Eukaryota"/>
</dbReference>
<dbReference type="GeneTree" id="ENSGT00940000154376"/>
<dbReference type="HOGENOM" id="CLU_004253_2_0_1"/>
<dbReference type="InParanoid" id="Q0VCW1"/>
<dbReference type="OMA" id="IKFNYMW"/>
<dbReference type="OrthoDB" id="6359816at2759"/>
<dbReference type="TreeFam" id="TF313419"/>
<dbReference type="Reactome" id="R-BTA-5632684">
    <property type="pathway name" value="Hedgehog 'on' state"/>
</dbReference>
<dbReference type="UniPathway" id="UPA00143"/>
<dbReference type="Proteomes" id="UP000009136">
    <property type="component" value="Chromosome 19"/>
</dbReference>
<dbReference type="Bgee" id="ENSBTAG00000005824">
    <property type="expression patterns" value="Expressed in myometrium and 104 other cell types or tissues"/>
</dbReference>
<dbReference type="GO" id="GO:0031463">
    <property type="term" value="C:Cul3-RING ubiquitin ligase complex"/>
    <property type="evidence" value="ECO:0000250"/>
    <property type="project" value="UniProtKB"/>
</dbReference>
<dbReference type="GO" id="GO:0005737">
    <property type="term" value="C:cytoplasm"/>
    <property type="evidence" value="ECO:0000318"/>
    <property type="project" value="GO_Central"/>
</dbReference>
<dbReference type="GO" id="GO:0016607">
    <property type="term" value="C:nuclear speck"/>
    <property type="evidence" value="ECO:0007669"/>
    <property type="project" value="UniProtKB-SubCell"/>
</dbReference>
<dbReference type="GO" id="GO:0005634">
    <property type="term" value="C:nucleus"/>
    <property type="evidence" value="ECO:0000250"/>
    <property type="project" value="UniProtKB"/>
</dbReference>
<dbReference type="GO" id="GO:0042802">
    <property type="term" value="F:identical protein binding"/>
    <property type="evidence" value="ECO:0007669"/>
    <property type="project" value="Ensembl"/>
</dbReference>
<dbReference type="GO" id="GO:0031625">
    <property type="term" value="F:ubiquitin protein ligase binding"/>
    <property type="evidence" value="ECO:0000318"/>
    <property type="project" value="GO_Central"/>
</dbReference>
<dbReference type="GO" id="GO:0043161">
    <property type="term" value="P:proteasome-mediated ubiquitin-dependent protein catabolic process"/>
    <property type="evidence" value="ECO:0000250"/>
    <property type="project" value="UniProtKB"/>
</dbReference>
<dbReference type="GO" id="GO:0000209">
    <property type="term" value="P:protein polyubiquitination"/>
    <property type="evidence" value="ECO:0007669"/>
    <property type="project" value="Ensembl"/>
</dbReference>
<dbReference type="GO" id="GO:0030162">
    <property type="term" value="P:regulation of proteolysis"/>
    <property type="evidence" value="ECO:0000318"/>
    <property type="project" value="GO_Central"/>
</dbReference>
<dbReference type="CDD" id="cd18518">
    <property type="entry name" value="BACK_SPOP"/>
    <property type="match status" value="1"/>
</dbReference>
<dbReference type="CDD" id="cd18279">
    <property type="entry name" value="BTB_POZ_SPOP-like"/>
    <property type="match status" value="1"/>
</dbReference>
<dbReference type="CDD" id="cd03774">
    <property type="entry name" value="MATH_SPOP"/>
    <property type="match status" value="1"/>
</dbReference>
<dbReference type="FunFam" id="2.60.210.10:FF:000028">
    <property type="entry name" value="Speckle-type POZ protein-like"/>
    <property type="match status" value="1"/>
</dbReference>
<dbReference type="FunFam" id="3.30.710.10:FF:000008">
    <property type="entry name" value="Speckle-type POZ protein-like a"/>
    <property type="match status" value="1"/>
</dbReference>
<dbReference type="Gene3D" id="6.10.250.3030">
    <property type="match status" value="1"/>
</dbReference>
<dbReference type="Gene3D" id="6.20.250.50">
    <property type="match status" value="1"/>
</dbReference>
<dbReference type="Gene3D" id="2.60.210.10">
    <property type="entry name" value="Apoptosis, Tumor Necrosis Factor Receptor Associated Protein 2, Chain A"/>
    <property type="match status" value="1"/>
</dbReference>
<dbReference type="Gene3D" id="3.30.710.10">
    <property type="entry name" value="Potassium Channel Kv1.1, Chain A"/>
    <property type="match status" value="1"/>
</dbReference>
<dbReference type="InterPro" id="IPR056423">
    <property type="entry name" value="BACK_BPM_SPOP"/>
</dbReference>
<dbReference type="InterPro" id="IPR000210">
    <property type="entry name" value="BTB/POZ_dom"/>
</dbReference>
<dbReference type="InterPro" id="IPR002083">
    <property type="entry name" value="MATH/TRAF_dom"/>
</dbReference>
<dbReference type="InterPro" id="IPR011333">
    <property type="entry name" value="SKP1/BTB/POZ_sf"/>
</dbReference>
<dbReference type="InterPro" id="IPR034089">
    <property type="entry name" value="SPOP_C"/>
</dbReference>
<dbReference type="InterPro" id="IPR008974">
    <property type="entry name" value="TRAF-like"/>
</dbReference>
<dbReference type="PANTHER" id="PTHR24413">
    <property type="entry name" value="SPECKLE-TYPE POZ PROTEIN"/>
    <property type="match status" value="1"/>
</dbReference>
<dbReference type="Pfam" id="PF24570">
    <property type="entry name" value="BACK_BPM_SPOP"/>
    <property type="match status" value="1"/>
</dbReference>
<dbReference type="Pfam" id="PF00651">
    <property type="entry name" value="BTB"/>
    <property type="match status" value="1"/>
</dbReference>
<dbReference type="Pfam" id="PF22486">
    <property type="entry name" value="MATH_2"/>
    <property type="match status" value="1"/>
</dbReference>
<dbReference type="SMART" id="SM00225">
    <property type="entry name" value="BTB"/>
    <property type="match status" value="1"/>
</dbReference>
<dbReference type="SMART" id="SM00061">
    <property type="entry name" value="MATH"/>
    <property type="match status" value="1"/>
</dbReference>
<dbReference type="SUPFAM" id="SSF54695">
    <property type="entry name" value="POZ domain"/>
    <property type="match status" value="1"/>
</dbReference>
<dbReference type="SUPFAM" id="SSF49599">
    <property type="entry name" value="TRAF domain-like"/>
    <property type="match status" value="1"/>
</dbReference>
<dbReference type="PROSITE" id="PS50097">
    <property type="entry name" value="BTB"/>
    <property type="match status" value="1"/>
</dbReference>
<dbReference type="PROSITE" id="PS50144">
    <property type="entry name" value="MATH"/>
    <property type="match status" value="1"/>
</dbReference>
<keyword id="KW-0539">Nucleus</keyword>
<keyword id="KW-1185">Reference proteome</keyword>
<keyword id="KW-0833">Ubl conjugation pathway</keyword>
<proteinExistence type="evidence at transcript level"/>
<reference key="1">
    <citation type="submission" date="2006-08" db="EMBL/GenBank/DDBJ databases">
        <authorList>
            <consortium name="NIH - Mammalian Gene Collection (MGC) project"/>
        </authorList>
    </citation>
    <scope>NUCLEOTIDE SEQUENCE [LARGE SCALE MRNA]</scope>
    <source>
        <strain>Hereford</strain>
        <tissue>Fetal skin</tissue>
    </source>
</reference>
<organism>
    <name type="scientific">Bos taurus</name>
    <name type="common">Bovine</name>
    <dbReference type="NCBI Taxonomy" id="9913"/>
    <lineage>
        <taxon>Eukaryota</taxon>
        <taxon>Metazoa</taxon>
        <taxon>Chordata</taxon>
        <taxon>Craniata</taxon>
        <taxon>Vertebrata</taxon>
        <taxon>Euteleostomi</taxon>
        <taxon>Mammalia</taxon>
        <taxon>Eutheria</taxon>
        <taxon>Laurasiatheria</taxon>
        <taxon>Artiodactyla</taxon>
        <taxon>Ruminantia</taxon>
        <taxon>Pecora</taxon>
        <taxon>Bovidae</taxon>
        <taxon>Bovinae</taxon>
        <taxon>Bos</taxon>
    </lineage>
</organism>
<name>SPOP_BOVIN</name>
<accession>Q0VCW1</accession>
<comment type="function">
    <text evidence="2 3">Component of a cullin-RING-based BCR (BTB-CUL3-RBX1) E3 ubiquitin-protein ligase complex that mediates the ubiquitination of target proteins, leading most often to their proteasomal degradation. In complex with CUL3, involved in ubiquitination and proteasomal degradation of BRMS1, DAXX, PDX1/IPF1, GLI2 and GLI3. In complex with CUL3, involved in ubiquitination of MACROH2A1 and BMI1; this does not lead to their proteasomal degradation. Inhibits transcriptional activation of PDX1/IPF1 targets, such as insulin, by promoting PDX1/IPF1 degradation. The cullin-RING-based BCR (BTB-CUL3-RBX1) E3 ubiquitin-protein ligase complex containing homodimeric SPOP has higher ubiquitin ligase activity than the complex that contains the heterodimer formed by SPOP and SPOPL. Involved in the regulation of bromodomain and extra-terminal motif (BET) proteins BRD2, BRD3, BRD4 stability.Plays an essential role for proper translation, but not for their degradation, of critical DNA replication licensing factors CDT1 and CDC6, thereby participating in DNA synthesis and cell proliferation. Regulates interferon regulatory factor 1/IRF1 proteasomal turnover by targeting S/T-rich degrons in IRF1 (By similarity). Involved in ubiquitination of BRDT and promotes its degradation, thereby regulates histone removal in early condensing spermatids prior to histone-to-protamine exchange (By similarity).</text>
</comment>
<comment type="pathway">
    <text evidence="2">Protein modification; protein ubiquitination.</text>
</comment>
<comment type="subunit">
    <text evidence="1 2">Interacts with GLI2 and GLI3 (By similarity). Homodimer and homooligomer. Heterodimer with SPOPL. Each dimer interacts with two CUL3 molecules. Part of cullin-RING-based BCR (BTB-CUL3-RBX1) E3 ubiquitin-protein ligase complexes that contain CUL3 and homodimeric SPOP, or the heterodimer formed by SPOP and SPOPL, plus a target protein, such as MACROH2A1, PDX1/IPF1, BMI1, BRMS1 and DAXX. Interacts with IRF1; this interaction mediates IRF1 proteasomal degradation (By similarity). Interacts with HNF1A (By similarity).</text>
</comment>
<comment type="subcellular location">
    <subcellularLocation>
        <location evidence="2">Nucleus</location>
    </subcellularLocation>
    <subcellularLocation>
        <location evidence="2">Nucleus speckle</location>
    </subcellularLocation>
</comment>
<comment type="domain">
    <text evidence="2">The BTB (POZ) domain mediates dimerization and interaction with CUL3.</text>
</comment>
<comment type="domain">
    <text evidence="2">The MATH domain mediates interaction with protein-ubiquitin ligase substrates, such as MACROH2A1 and BMI1.</text>
</comment>
<comment type="similarity">
    <text evidence="6">Belongs to the Tdpoz family.</text>
</comment>
<feature type="chain" id="PRO_0000274582" description="Speckle-type POZ protein">
    <location>
        <begin position="1"/>
        <end position="374"/>
    </location>
</feature>
<feature type="domain" description="MATH" evidence="5">
    <location>
        <begin position="31"/>
        <end position="161"/>
    </location>
</feature>
<feature type="domain" description="BTB" evidence="4">
    <location>
        <begin position="173"/>
        <end position="297"/>
    </location>
</feature>
<feature type="region of interest" description="Required for nuclear localization" evidence="1">
    <location>
        <begin position="71"/>
        <end position="191"/>
    </location>
</feature>
<feature type="region of interest" description="Important for binding substrate proteins" evidence="1">
    <location>
        <begin position="123"/>
        <end position="133"/>
    </location>
</feature>
<feature type="region of interest" description="Important for homodimerization" evidence="1">
    <location>
        <begin position="186"/>
        <end position="217"/>
    </location>
</feature>
<feature type="region of interest" description="Important for homodimerization" evidence="1">
    <location>
        <begin position="297"/>
        <end position="355"/>
    </location>
</feature>